<evidence type="ECO:0000250" key="1">
    <source>
        <dbReference type="UniProtKB" id="P41351"/>
    </source>
</evidence>
<evidence type="ECO:0000250" key="2">
    <source>
        <dbReference type="UniProtKB" id="P68363"/>
    </source>
</evidence>
<evidence type="ECO:0000250" key="3">
    <source>
        <dbReference type="UniProtKB" id="P68369"/>
    </source>
</evidence>
<evidence type="ECO:0000250" key="4">
    <source>
        <dbReference type="UniProtKB" id="Q71U36"/>
    </source>
</evidence>
<evidence type="ECO:0000256" key="5">
    <source>
        <dbReference type="SAM" id="MobiDB-lite"/>
    </source>
</evidence>
<evidence type="ECO:0000305" key="6"/>
<sequence length="451" mass="50168">MRECISIHVGQAGVQIGNACWELYCLEHGIQPDGQMPSDKTIGGGDDSFNTFFSETGAGKHVPRAVFVDLEPTVIDEVRTGTYRQLFHPEQLITGKEDAANNYARGHYTIGKEIIDLVLDRIRKLADQCTGLQGFLVFHSFGGGTGSGFTSLLMERLSVDYGKKSKLEFSIYPAPQVSTAVVEPYNSILTTHTTLEHSDCAFMVDNEAIYDICRRNLDIERPTYTNLNRLISQIVSSITASLRFDGALNVDLTEFQTNLVPYPRIHFPLATYAPVISAEKAYHEQLSVSEITNACFEPANQMVKCDPRHGKYMACCLLYRGDVVPKDVNAAIATIKTKRSIQFVDWCPTGFKVGINYQPPTVVPGGDLAKVQRAVCMLSNTTAIAEAWARLDHKFDLMYAKRAFVHWYVGEGMEEGEFSEAREDMAALEKDYEEVGVDSVEGEGEEEGEEY</sequence>
<feature type="chain" id="PRO_0000048232" description="Tubulin alpha chain">
    <location>
        <begin position="1"/>
        <end position="451"/>
    </location>
</feature>
<feature type="chain" id="PRO_0000437409" description="Detyrosinated tubulin alpha chain" evidence="4">
    <location>
        <begin position="1"/>
        <end position="450"/>
    </location>
</feature>
<feature type="region of interest" description="Disordered" evidence="5">
    <location>
        <begin position="432"/>
        <end position="451"/>
    </location>
</feature>
<feature type="short sequence motif" description="MREC motif" evidence="2">
    <location>
        <begin position="1"/>
        <end position="4"/>
    </location>
</feature>
<feature type="active site" evidence="2">
    <location>
        <position position="254"/>
    </location>
</feature>
<feature type="binding site" evidence="2">
    <location>
        <position position="11"/>
    </location>
    <ligand>
        <name>GTP</name>
        <dbReference type="ChEBI" id="CHEBI:37565"/>
    </ligand>
</feature>
<feature type="binding site" evidence="2">
    <location>
        <position position="71"/>
    </location>
    <ligand>
        <name>GTP</name>
        <dbReference type="ChEBI" id="CHEBI:37565"/>
    </ligand>
</feature>
<feature type="binding site" evidence="2">
    <location>
        <position position="71"/>
    </location>
    <ligand>
        <name>Mg(2+)</name>
        <dbReference type="ChEBI" id="CHEBI:18420"/>
    </ligand>
</feature>
<feature type="binding site" evidence="2">
    <location>
        <position position="140"/>
    </location>
    <ligand>
        <name>GTP</name>
        <dbReference type="ChEBI" id="CHEBI:37565"/>
    </ligand>
</feature>
<feature type="binding site" evidence="2">
    <location>
        <position position="144"/>
    </location>
    <ligand>
        <name>GTP</name>
        <dbReference type="ChEBI" id="CHEBI:37565"/>
    </ligand>
</feature>
<feature type="binding site" evidence="2">
    <location>
        <position position="145"/>
    </location>
    <ligand>
        <name>GTP</name>
        <dbReference type="ChEBI" id="CHEBI:37565"/>
    </ligand>
</feature>
<feature type="binding site" evidence="2">
    <location>
        <position position="179"/>
    </location>
    <ligand>
        <name>GTP</name>
        <dbReference type="ChEBI" id="CHEBI:37565"/>
    </ligand>
</feature>
<feature type="binding site" evidence="2">
    <location>
        <position position="206"/>
    </location>
    <ligand>
        <name>GTP</name>
        <dbReference type="ChEBI" id="CHEBI:37565"/>
    </ligand>
</feature>
<feature type="binding site" evidence="2">
    <location>
        <position position="228"/>
    </location>
    <ligand>
        <name>GTP</name>
        <dbReference type="ChEBI" id="CHEBI:37565"/>
    </ligand>
</feature>
<feature type="site" description="Involved in polymerization">
    <location>
        <position position="451"/>
    </location>
</feature>
<feature type="modified residue" description="N6-acetyllysine" evidence="1 4">
    <location>
        <position position="40"/>
    </location>
</feature>
<feature type="modified residue" description="5-glutamyl polyglutamate" evidence="3">
    <location>
        <position position="445"/>
    </location>
</feature>
<proteinExistence type="evidence at transcript level"/>
<name>TBA_TORMA</name>
<accession>P36220</accession>
<reference key="1">
    <citation type="journal article" date="1995" name="Gene">
        <title>Cloning characterization and expression of the cDNA encoding a neuron-specific alpha-tubulin isoform highly represented in the electric lobe of Torpedo marmorata.</title>
        <authorList>
            <person name="Canals J.M."/>
            <person name="Ruiz-Avila L."/>
            <person name="Aguado F."/>
            <person name="Majo G."/>
            <person name="Marsal J."/>
        </authorList>
    </citation>
    <scope>NUCLEOTIDE SEQUENCE [MRNA]</scope>
    <source>
        <tissue>Electric organ</tissue>
    </source>
</reference>
<organism>
    <name type="scientific">Torpedo marmorata</name>
    <name type="common">Marbled electric ray</name>
    <dbReference type="NCBI Taxonomy" id="7788"/>
    <lineage>
        <taxon>Eukaryota</taxon>
        <taxon>Metazoa</taxon>
        <taxon>Chordata</taxon>
        <taxon>Craniata</taxon>
        <taxon>Vertebrata</taxon>
        <taxon>Chondrichthyes</taxon>
        <taxon>Elasmobranchii</taxon>
        <taxon>Batoidea</taxon>
        <taxon>Torpediniformes</taxon>
        <taxon>Torpedinidae</taxon>
        <taxon>Torpedo</taxon>
    </lineage>
</organism>
<comment type="function">
    <text>Tubulin is the major constituent of microtubules, a cylinder consisting of laterally associated linear protofilaments composed of alpha- and beta-tubulin heterodimers. Microtubules grow by the addition of GTP-tubulin dimers to the microtubule end, where a stabilizing cap forms. Below the cap, tubulin dimers are in GDP-bound state, owing to GTPase activity of alpha-tubulin.</text>
</comment>
<comment type="catalytic activity">
    <reaction evidence="2">
        <text>GTP + H2O = GDP + phosphate + H(+)</text>
        <dbReference type="Rhea" id="RHEA:19669"/>
        <dbReference type="ChEBI" id="CHEBI:15377"/>
        <dbReference type="ChEBI" id="CHEBI:15378"/>
        <dbReference type="ChEBI" id="CHEBI:37565"/>
        <dbReference type="ChEBI" id="CHEBI:43474"/>
        <dbReference type="ChEBI" id="CHEBI:58189"/>
    </reaction>
    <physiologicalReaction direction="left-to-right" evidence="2">
        <dbReference type="Rhea" id="RHEA:19670"/>
    </physiologicalReaction>
</comment>
<comment type="cofactor">
    <cofactor evidence="2">
        <name>Mg(2+)</name>
        <dbReference type="ChEBI" id="CHEBI:18420"/>
    </cofactor>
</comment>
<comment type="subunit">
    <text>Dimer of alpha and beta chains. A typical microtubule is a hollow water-filled tube with an outer diameter of 25 nm and an inner diameter of 15 nM. Alpha-beta heterodimers associate head-to-tail to form protofilaments running lengthwise along the microtubule wall with the beta-tubulin subunit facing the microtubule plus end conferring a structural polarity. Microtubules usually have 13 protofilaments but different protofilament numbers can be found in some organisms and specialized cells.</text>
</comment>
<comment type="subcellular location">
    <subcellularLocation>
        <location>Cytoplasm</location>
        <location>Cytoskeleton</location>
    </subcellularLocation>
</comment>
<comment type="domain">
    <text evidence="2">The MREC motif may be critical for tubulin autoregulation.</text>
</comment>
<comment type="PTM">
    <text evidence="3">Some glutamate residues at the C-terminus are polyglycylated, resulting in polyglycine chains on the gamma-carboxyl group. Glycylation is mainly limited to tubulin incorporated into axonemes (cilia and flagella) whereas glutamylation is prevalent in neuronal cells, centrioles, axonemes, and the mitotic spindle. Both modifications can coexist on the same protein on adjacent residues, and lowering polyglycylation levels increases polyglutamylation, and reciprocally. The precise function of polyglycylation is still unclear.</text>
</comment>
<comment type="PTM">
    <text evidence="3 4">Some glutamate residues at the C-terminus are polyglutamylated, resulting in polyglutamate chains on the gamma-carboxyl group (By similarity). Polyglutamylation plays a key role in microtubule severing by spastin (SPAST). SPAST preferentially recognizes and acts on microtubules decorated with short polyglutamate tails: severing activity by SPAST increases as the number of glutamates per tubulin rises from one to eight, but decreases beyond this glutamylation threshold (By similarity).</text>
</comment>
<comment type="PTM">
    <text evidence="4">Acetylation of alpha chains at Lys-40 is located inside the microtubule lumen. This modification has been correlated with increased microtubule stability, intracellular transport and ciliary assembly.</text>
</comment>
<comment type="PTM">
    <text evidence="3 4">Undergoes a tyrosination/detyrosination cycle, the cyclic removal and re-addition of a C-terminal tyrosine residue by the enzymes tubulin tyrosine carboxypeptidase (MATCAP, VASH1 or VASH2) and tubulin tyrosine ligase (TTL), respectively.</text>
</comment>
<comment type="PTM">
    <molecule>Tubulin alpha chain</molecule>
    <text evidence="3 4">Tyrosination promotes microtubule interaction with CAP-Gly microtubule plus-end tracking proteins. Tyrosinated tubulins regulate the initiation of dynein-driven motility.</text>
</comment>
<comment type="PTM">
    <molecule>Detyrosinated tubulin alpha chain</molecule>
    <text evidence="3 4">Detyrosination is involved in metaphase plate congression by guiding chromosomes during mitosis (By similarity). Detyrosination increases microtubules-dependent mechanotransduction in dystrophic cardiac and skeletal muscle. In cardiomyocytes, detyrosinated microtubules are required to resist to contractile compression during contraction (By similarity).</text>
</comment>
<comment type="similarity">
    <text evidence="6">Belongs to the tubulin family.</text>
</comment>
<dbReference type="EC" id="3.6.5.-" evidence="2"/>
<dbReference type="EMBL" id="X71980">
    <property type="protein sequence ID" value="CAA50802.1"/>
    <property type="molecule type" value="mRNA"/>
</dbReference>
<dbReference type="PIR" id="JC4133">
    <property type="entry name" value="JC4133"/>
</dbReference>
<dbReference type="PIR" id="S33517">
    <property type="entry name" value="S33517"/>
</dbReference>
<dbReference type="SMR" id="P36220"/>
<dbReference type="GO" id="GO:0005737">
    <property type="term" value="C:cytoplasm"/>
    <property type="evidence" value="ECO:0007669"/>
    <property type="project" value="UniProtKB-KW"/>
</dbReference>
<dbReference type="GO" id="GO:0005874">
    <property type="term" value="C:microtubule"/>
    <property type="evidence" value="ECO:0007669"/>
    <property type="project" value="UniProtKB-KW"/>
</dbReference>
<dbReference type="GO" id="GO:0005525">
    <property type="term" value="F:GTP binding"/>
    <property type="evidence" value="ECO:0007669"/>
    <property type="project" value="UniProtKB-KW"/>
</dbReference>
<dbReference type="GO" id="GO:0016787">
    <property type="term" value="F:hydrolase activity"/>
    <property type="evidence" value="ECO:0007669"/>
    <property type="project" value="UniProtKB-KW"/>
</dbReference>
<dbReference type="GO" id="GO:0046872">
    <property type="term" value="F:metal ion binding"/>
    <property type="evidence" value="ECO:0007669"/>
    <property type="project" value="UniProtKB-KW"/>
</dbReference>
<dbReference type="GO" id="GO:0005200">
    <property type="term" value="F:structural constituent of cytoskeleton"/>
    <property type="evidence" value="ECO:0007669"/>
    <property type="project" value="InterPro"/>
</dbReference>
<dbReference type="GO" id="GO:0007017">
    <property type="term" value="P:microtubule-based process"/>
    <property type="evidence" value="ECO:0007669"/>
    <property type="project" value="InterPro"/>
</dbReference>
<dbReference type="CDD" id="cd02186">
    <property type="entry name" value="alpha_tubulin"/>
    <property type="match status" value="1"/>
</dbReference>
<dbReference type="FunFam" id="1.10.287.600:FF:000005">
    <property type="entry name" value="Tubulin alpha chain"/>
    <property type="match status" value="1"/>
</dbReference>
<dbReference type="FunFam" id="3.30.1330.20:FF:000001">
    <property type="entry name" value="Tubulin alpha chain"/>
    <property type="match status" value="1"/>
</dbReference>
<dbReference type="FunFam" id="3.40.50.1440:FF:000002">
    <property type="entry name" value="Tubulin alpha chain"/>
    <property type="match status" value="1"/>
</dbReference>
<dbReference type="Gene3D" id="1.10.287.600">
    <property type="entry name" value="Helix hairpin bin"/>
    <property type="match status" value="1"/>
</dbReference>
<dbReference type="Gene3D" id="3.30.1330.20">
    <property type="entry name" value="Tubulin/FtsZ, C-terminal domain"/>
    <property type="match status" value="1"/>
</dbReference>
<dbReference type="Gene3D" id="3.40.50.1440">
    <property type="entry name" value="Tubulin/FtsZ, GTPase domain"/>
    <property type="match status" value="1"/>
</dbReference>
<dbReference type="InterPro" id="IPR002452">
    <property type="entry name" value="Alpha_tubulin"/>
</dbReference>
<dbReference type="InterPro" id="IPR008280">
    <property type="entry name" value="Tub_FtsZ_C"/>
</dbReference>
<dbReference type="InterPro" id="IPR000217">
    <property type="entry name" value="Tubulin"/>
</dbReference>
<dbReference type="InterPro" id="IPR037103">
    <property type="entry name" value="Tubulin/FtsZ-like_C"/>
</dbReference>
<dbReference type="InterPro" id="IPR018316">
    <property type="entry name" value="Tubulin/FtsZ_2-layer-sand-dom"/>
</dbReference>
<dbReference type="InterPro" id="IPR036525">
    <property type="entry name" value="Tubulin/FtsZ_GTPase_sf"/>
</dbReference>
<dbReference type="InterPro" id="IPR023123">
    <property type="entry name" value="Tubulin_C"/>
</dbReference>
<dbReference type="InterPro" id="IPR017975">
    <property type="entry name" value="Tubulin_CS"/>
</dbReference>
<dbReference type="InterPro" id="IPR003008">
    <property type="entry name" value="Tubulin_FtsZ_GTPase"/>
</dbReference>
<dbReference type="PANTHER" id="PTHR11588">
    <property type="entry name" value="TUBULIN"/>
    <property type="match status" value="1"/>
</dbReference>
<dbReference type="Pfam" id="PF00091">
    <property type="entry name" value="Tubulin"/>
    <property type="match status" value="1"/>
</dbReference>
<dbReference type="Pfam" id="PF03953">
    <property type="entry name" value="Tubulin_C"/>
    <property type="match status" value="1"/>
</dbReference>
<dbReference type="PRINTS" id="PR01162">
    <property type="entry name" value="ALPHATUBULIN"/>
</dbReference>
<dbReference type="PRINTS" id="PR01161">
    <property type="entry name" value="TUBULIN"/>
</dbReference>
<dbReference type="SMART" id="SM00864">
    <property type="entry name" value="Tubulin"/>
    <property type="match status" value="1"/>
</dbReference>
<dbReference type="SMART" id="SM00865">
    <property type="entry name" value="Tubulin_C"/>
    <property type="match status" value="1"/>
</dbReference>
<dbReference type="SUPFAM" id="SSF55307">
    <property type="entry name" value="Tubulin C-terminal domain-like"/>
    <property type="match status" value="1"/>
</dbReference>
<dbReference type="SUPFAM" id="SSF52490">
    <property type="entry name" value="Tubulin nucleotide-binding domain-like"/>
    <property type="match status" value="1"/>
</dbReference>
<dbReference type="PROSITE" id="PS00227">
    <property type="entry name" value="TUBULIN"/>
    <property type="match status" value="1"/>
</dbReference>
<keyword id="KW-0007">Acetylation</keyword>
<keyword id="KW-0963">Cytoplasm</keyword>
<keyword id="KW-0206">Cytoskeleton</keyword>
<keyword id="KW-0342">GTP-binding</keyword>
<keyword id="KW-0378">Hydrolase</keyword>
<keyword id="KW-1017">Isopeptide bond</keyword>
<keyword id="KW-0460">Magnesium</keyword>
<keyword id="KW-0479">Metal-binding</keyword>
<keyword id="KW-0493">Microtubule</keyword>
<keyword id="KW-0547">Nucleotide-binding</keyword>
<protein>
    <recommendedName>
        <fullName>Tubulin alpha chain</fullName>
        <ecNumber evidence="2">3.6.5.-</ecNumber>
    </recommendedName>
    <alternativeName>
        <fullName>Alpha T6</fullName>
    </alternativeName>
    <component>
        <recommendedName>
            <fullName>Detyrosinated tubulin alpha chain</fullName>
        </recommendedName>
    </component>
</protein>